<name>LDH_CLOBH</name>
<accession>A5I1Z6</accession>
<accession>A7G3Q0</accession>
<sequence length="318" mass="34734">MIKKRNTTKISVIGAGSVGATTAYALMLSGVATEIVLVDVNKSKTEGEAMDLSHGADFVKPVNILSGDYKDTEGSDIVVITAGAAQKVGETRLQLINKNINIFKSIIPQVVKYNKDAILLVVSNPVDVLSYVTYKLSGFPKERVIGSGTVLDTSRLKHEIGKRYKIDPRNVNTYIMGEHGDSEIATWSVTNIQNIKIDEYANKENLEYNDNFRKEVYENVKNAAYEVINRKGATFYAIALAVTRIVKAILGDEKTILPVSTLVENYYGIKDVYLGMPCIVGGSGIEKALSIDLNKTEASKLVKSAETLKNTLNNASCL</sequence>
<evidence type="ECO:0000255" key="1">
    <source>
        <dbReference type="HAMAP-Rule" id="MF_00488"/>
    </source>
</evidence>
<reference key="1">
    <citation type="journal article" date="2007" name="Genome Res.">
        <title>Genome sequence of a proteolytic (Group I) Clostridium botulinum strain Hall A and comparative analysis of the clostridial genomes.</title>
        <authorList>
            <person name="Sebaihia M."/>
            <person name="Peck M.W."/>
            <person name="Minton N.P."/>
            <person name="Thomson N.R."/>
            <person name="Holden M.T.G."/>
            <person name="Mitchell W.J."/>
            <person name="Carter A.T."/>
            <person name="Bentley S.D."/>
            <person name="Mason D.R."/>
            <person name="Crossman L."/>
            <person name="Paul C.J."/>
            <person name="Ivens A."/>
            <person name="Wells-Bennik M.H.J."/>
            <person name="Davis I.J."/>
            <person name="Cerdeno-Tarraga A.M."/>
            <person name="Churcher C."/>
            <person name="Quail M.A."/>
            <person name="Chillingworth T."/>
            <person name="Feltwell T."/>
            <person name="Fraser A."/>
            <person name="Goodhead I."/>
            <person name="Hance Z."/>
            <person name="Jagels K."/>
            <person name="Larke N."/>
            <person name="Maddison M."/>
            <person name="Moule S."/>
            <person name="Mungall K."/>
            <person name="Norbertczak H."/>
            <person name="Rabbinowitsch E."/>
            <person name="Sanders M."/>
            <person name="Simmonds M."/>
            <person name="White B."/>
            <person name="Whithead S."/>
            <person name="Parkhill J."/>
        </authorList>
    </citation>
    <scope>NUCLEOTIDE SEQUENCE [LARGE SCALE GENOMIC DNA]</scope>
    <source>
        <strain>Hall / ATCC 3502 / NCTC 13319 / Type A</strain>
    </source>
</reference>
<reference key="2">
    <citation type="journal article" date="2007" name="PLoS ONE">
        <title>Analysis of the neurotoxin complex genes in Clostridium botulinum A1-A4 and B1 strains: BoNT/A3, /Ba4 and /B1 clusters are located within plasmids.</title>
        <authorList>
            <person name="Smith T.J."/>
            <person name="Hill K.K."/>
            <person name="Foley B.T."/>
            <person name="Detter J.C."/>
            <person name="Munk A.C."/>
            <person name="Bruce D.C."/>
            <person name="Doggett N.A."/>
            <person name="Smith L.A."/>
            <person name="Marks J.D."/>
            <person name="Xie G."/>
            <person name="Brettin T.S."/>
        </authorList>
    </citation>
    <scope>NUCLEOTIDE SEQUENCE [LARGE SCALE GENOMIC DNA]</scope>
    <source>
        <strain>Hall / ATCC 3502 / NCTC 13319 / Type A</strain>
    </source>
</reference>
<proteinExistence type="inferred from homology"/>
<organism>
    <name type="scientific">Clostridium botulinum (strain Hall / ATCC 3502 / NCTC 13319 / Type A)</name>
    <dbReference type="NCBI Taxonomy" id="441771"/>
    <lineage>
        <taxon>Bacteria</taxon>
        <taxon>Bacillati</taxon>
        <taxon>Bacillota</taxon>
        <taxon>Clostridia</taxon>
        <taxon>Eubacteriales</taxon>
        <taxon>Clostridiaceae</taxon>
        <taxon>Clostridium</taxon>
    </lineage>
</organism>
<feature type="chain" id="PRO_1000026499" description="L-lactate dehydrogenase">
    <location>
        <begin position="1"/>
        <end position="318"/>
    </location>
</feature>
<feature type="active site" description="Proton acceptor" evidence="1">
    <location>
        <position position="179"/>
    </location>
</feature>
<feature type="binding site" evidence="1">
    <location>
        <position position="18"/>
    </location>
    <ligand>
        <name>NAD(+)</name>
        <dbReference type="ChEBI" id="CHEBI:57540"/>
    </ligand>
</feature>
<feature type="binding site" evidence="1">
    <location>
        <position position="39"/>
    </location>
    <ligand>
        <name>NAD(+)</name>
        <dbReference type="ChEBI" id="CHEBI:57540"/>
    </ligand>
</feature>
<feature type="binding site" evidence="1">
    <location>
        <position position="44"/>
    </location>
    <ligand>
        <name>NAD(+)</name>
        <dbReference type="ChEBI" id="CHEBI:57540"/>
    </ligand>
</feature>
<feature type="binding site" evidence="1">
    <location>
        <position position="69"/>
    </location>
    <ligand>
        <name>NAD(+)</name>
        <dbReference type="ChEBI" id="CHEBI:57540"/>
    </ligand>
</feature>
<feature type="binding site" evidence="1">
    <location>
        <begin position="83"/>
        <end position="84"/>
    </location>
    <ligand>
        <name>NAD(+)</name>
        <dbReference type="ChEBI" id="CHEBI:57540"/>
    </ligand>
</feature>
<feature type="binding site" evidence="1">
    <location>
        <position position="86"/>
    </location>
    <ligand>
        <name>substrate</name>
    </ligand>
</feature>
<feature type="binding site" evidence="1">
    <location>
        <position position="92"/>
    </location>
    <ligand>
        <name>substrate</name>
    </ligand>
</feature>
<feature type="binding site" evidence="1">
    <location>
        <position position="105"/>
    </location>
    <ligand>
        <name>NAD(+)</name>
        <dbReference type="ChEBI" id="CHEBI:57540"/>
    </ligand>
</feature>
<feature type="binding site" evidence="1">
    <location>
        <begin position="122"/>
        <end position="124"/>
    </location>
    <ligand>
        <name>NAD(+)</name>
        <dbReference type="ChEBI" id="CHEBI:57540"/>
    </ligand>
</feature>
<feature type="binding site" evidence="1">
    <location>
        <begin position="124"/>
        <end position="127"/>
    </location>
    <ligand>
        <name>substrate</name>
    </ligand>
</feature>
<feature type="binding site" evidence="1">
    <location>
        <position position="147"/>
    </location>
    <ligand>
        <name>NAD(+)</name>
        <dbReference type="ChEBI" id="CHEBI:57540"/>
    </ligand>
</feature>
<feature type="binding site" evidence="1">
    <location>
        <begin position="152"/>
        <end position="155"/>
    </location>
    <ligand>
        <name>substrate</name>
    </ligand>
</feature>
<feature type="binding site" evidence="1">
    <location>
        <position position="234"/>
    </location>
    <ligand>
        <name>substrate</name>
    </ligand>
</feature>
<feature type="modified residue" description="Phosphotyrosine" evidence="1">
    <location>
        <position position="225"/>
    </location>
</feature>
<protein>
    <recommendedName>
        <fullName evidence="1">L-lactate dehydrogenase</fullName>
        <shortName evidence="1">L-LDH</shortName>
        <ecNumber evidence="1">1.1.1.27</ecNumber>
    </recommendedName>
</protein>
<gene>
    <name evidence="1" type="primary">ldh</name>
    <name type="ordered locus">CBO1519</name>
    <name type="ordered locus">CLC_1552</name>
</gene>
<comment type="function">
    <text evidence="1">Catalyzes the conversion of lactate to pyruvate.</text>
</comment>
<comment type="catalytic activity">
    <reaction evidence="1">
        <text>(S)-lactate + NAD(+) = pyruvate + NADH + H(+)</text>
        <dbReference type="Rhea" id="RHEA:23444"/>
        <dbReference type="ChEBI" id="CHEBI:15361"/>
        <dbReference type="ChEBI" id="CHEBI:15378"/>
        <dbReference type="ChEBI" id="CHEBI:16651"/>
        <dbReference type="ChEBI" id="CHEBI:57540"/>
        <dbReference type="ChEBI" id="CHEBI:57945"/>
        <dbReference type="EC" id="1.1.1.27"/>
    </reaction>
</comment>
<comment type="pathway">
    <text evidence="1">Fermentation; pyruvate fermentation to lactate; (S)-lactate from pyruvate: step 1/1.</text>
</comment>
<comment type="subunit">
    <text evidence="1">Homotetramer.</text>
</comment>
<comment type="subcellular location">
    <subcellularLocation>
        <location evidence="1">Cytoplasm</location>
    </subcellularLocation>
</comment>
<comment type="similarity">
    <text evidence="1">Belongs to the LDH/MDH superfamily. LDH family.</text>
</comment>
<keyword id="KW-0963">Cytoplasm</keyword>
<keyword id="KW-0520">NAD</keyword>
<keyword id="KW-0560">Oxidoreductase</keyword>
<keyword id="KW-0597">Phosphoprotein</keyword>
<keyword id="KW-1185">Reference proteome</keyword>
<dbReference type="EC" id="1.1.1.27" evidence="1"/>
<dbReference type="EMBL" id="CP000727">
    <property type="protein sequence ID" value="ABS36418.1"/>
    <property type="molecule type" value="Genomic_DNA"/>
</dbReference>
<dbReference type="EMBL" id="AM412317">
    <property type="protein sequence ID" value="CAL83060.1"/>
    <property type="molecule type" value="Genomic_DNA"/>
</dbReference>
<dbReference type="RefSeq" id="WP_011949073.1">
    <property type="nucleotide sequence ID" value="NC_009698.1"/>
</dbReference>
<dbReference type="RefSeq" id="YP_001254029.1">
    <property type="nucleotide sequence ID" value="NC_009495.1"/>
</dbReference>
<dbReference type="RefSeq" id="YP_001387415.1">
    <property type="nucleotide sequence ID" value="NC_009698.1"/>
</dbReference>
<dbReference type="SMR" id="A5I1Z6"/>
<dbReference type="GeneID" id="5187351"/>
<dbReference type="KEGG" id="cbh:CLC_1552"/>
<dbReference type="KEGG" id="cbo:CBO1519"/>
<dbReference type="PATRIC" id="fig|413999.7.peg.1496"/>
<dbReference type="HOGENOM" id="CLU_045401_1_1_9"/>
<dbReference type="UniPathway" id="UPA00554">
    <property type="reaction ID" value="UER00611"/>
</dbReference>
<dbReference type="PRO" id="PR:A5I1Z6"/>
<dbReference type="Proteomes" id="UP000001986">
    <property type="component" value="Chromosome"/>
</dbReference>
<dbReference type="GO" id="GO:0005737">
    <property type="term" value="C:cytoplasm"/>
    <property type="evidence" value="ECO:0007669"/>
    <property type="project" value="UniProtKB-SubCell"/>
</dbReference>
<dbReference type="GO" id="GO:0004459">
    <property type="term" value="F:L-lactate dehydrogenase activity"/>
    <property type="evidence" value="ECO:0000318"/>
    <property type="project" value="GO_Central"/>
</dbReference>
<dbReference type="GO" id="GO:0006096">
    <property type="term" value="P:glycolytic process"/>
    <property type="evidence" value="ECO:0007669"/>
    <property type="project" value="UniProtKB-UniRule"/>
</dbReference>
<dbReference type="GO" id="GO:0006089">
    <property type="term" value="P:lactate metabolic process"/>
    <property type="evidence" value="ECO:0000318"/>
    <property type="project" value="GO_Central"/>
</dbReference>
<dbReference type="GO" id="GO:0006090">
    <property type="term" value="P:pyruvate metabolic process"/>
    <property type="evidence" value="ECO:0000318"/>
    <property type="project" value="GO_Central"/>
</dbReference>
<dbReference type="CDD" id="cd05292">
    <property type="entry name" value="LDH_2"/>
    <property type="match status" value="1"/>
</dbReference>
<dbReference type="FunFam" id="3.40.50.720:FF:000018">
    <property type="entry name" value="Malate dehydrogenase"/>
    <property type="match status" value="1"/>
</dbReference>
<dbReference type="Gene3D" id="3.90.110.10">
    <property type="entry name" value="Lactate dehydrogenase/glycoside hydrolase, family 4, C-terminal"/>
    <property type="match status" value="1"/>
</dbReference>
<dbReference type="Gene3D" id="3.40.50.720">
    <property type="entry name" value="NAD(P)-binding Rossmann-like Domain"/>
    <property type="match status" value="1"/>
</dbReference>
<dbReference type="HAMAP" id="MF_00488">
    <property type="entry name" value="Lactate_dehydrog"/>
    <property type="match status" value="1"/>
</dbReference>
<dbReference type="InterPro" id="IPR001557">
    <property type="entry name" value="L-lactate/malate_DH"/>
</dbReference>
<dbReference type="InterPro" id="IPR011304">
    <property type="entry name" value="L-lactate_DH"/>
</dbReference>
<dbReference type="InterPro" id="IPR018177">
    <property type="entry name" value="L-lactate_DH_AS"/>
</dbReference>
<dbReference type="InterPro" id="IPR022383">
    <property type="entry name" value="Lactate/malate_DH_C"/>
</dbReference>
<dbReference type="InterPro" id="IPR001236">
    <property type="entry name" value="Lactate/malate_DH_N"/>
</dbReference>
<dbReference type="InterPro" id="IPR015955">
    <property type="entry name" value="Lactate_DH/Glyco_Ohase_4_C"/>
</dbReference>
<dbReference type="InterPro" id="IPR036291">
    <property type="entry name" value="NAD(P)-bd_dom_sf"/>
</dbReference>
<dbReference type="NCBIfam" id="TIGR01771">
    <property type="entry name" value="L-LDH-NAD"/>
    <property type="match status" value="1"/>
</dbReference>
<dbReference type="NCBIfam" id="NF000824">
    <property type="entry name" value="PRK00066.1"/>
    <property type="match status" value="1"/>
</dbReference>
<dbReference type="NCBIfam" id="NF004863">
    <property type="entry name" value="PRK06223.1"/>
    <property type="match status" value="1"/>
</dbReference>
<dbReference type="PANTHER" id="PTHR43128">
    <property type="entry name" value="L-2-HYDROXYCARBOXYLATE DEHYDROGENASE (NAD(P)(+))"/>
    <property type="match status" value="1"/>
</dbReference>
<dbReference type="PANTHER" id="PTHR43128:SF16">
    <property type="entry name" value="L-LACTATE DEHYDROGENASE"/>
    <property type="match status" value="1"/>
</dbReference>
<dbReference type="Pfam" id="PF02866">
    <property type="entry name" value="Ldh_1_C"/>
    <property type="match status" value="1"/>
</dbReference>
<dbReference type="Pfam" id="PF00056">
    <property type="entry name" value="Ldh_1_N"/>
    <property type="match status" value="1"/>
</dbReference>
<dbReference type="PIRSF" id="PIRSF000102">
    <property type="entry name" value="Lac_mal_DH"/>
    <property type="match status" value="1"/>
</dbReference>
<dbReference type="PRINTS" id="PR00086">
    <property type="entry name" value="LLDHDRGNASE"/>
</dbReference>
<dbReference type="SUPFAM" id="SSF56327">
    <property type="entry name" value="LDH C-terminal domain-like"/>
    <property type="match status" value="1"/>
</dbReference>
<dbReference type="SUPFAM" id="SSF51735">
    <property type="entry name" value="NAD(P)-binding Rossmann-fold domains"/>
    <property type="match status" value="1"/>
</dbReference>
<dbReference type="PROSITE" id="PS00064">
    <property type="entry name" value="L_LDH"/>
    <property type="match status" value="1"/>
</dbReference>